<comment type="function">
    <text evidence="1">This protein binds to 23S rRNA in the presence of protein L20.</text>
</comment>
<comment type="subunit">
    <text evidence="1">Part of the 50S ribosomal subunit. Contacts protein L20.</text>
</comment>
<comment type="similarity">
    <text evidence="1">Belongs to the bacterial ribosomal protein bL21 family.</text>
</comment>
<reference key="1">
    <citation type="journal article" date="2005" name="Infect. Immun.">
        <title>Comparative genomic analysis of Chlamydia trachomatis oculotropic and genitotropic strains.</title>
        <authorList>
            <person name="Carlson J.H."/>
            <person name="Porcella S.F."/>
            <person name="McClarty G."/>
            <person name="Caldwell H.D."/>
        </authorList>
    </citation>
    <scope>NUCLEOTIDE SEQUENCE [LARGE SCALE GENOMIC DNA]</scope>
    <source>
        <strain>ATCC VR-571B / DSM 19440 / HAR-13</strain>
    </source>
</reference>
<organism>
    <name type="scientific">Chlamydia trachomatis serovar A (strain ATCC VR-571B / DSM 19440 / HAR-13)</name>
    <dbReference type="NCBI Taxonomy" id="315277"/>
    <lineage>
        <taxon>Bacteria</taxon>
        <taxon>Pseudomonadati</taxon>
        <taxon>Chlamydiota</taxon>
        <taxon>Chlamydiia</taxon>
        <taxon>Chlamydiales</taxon>
        <taxon>Chlamydiaceae</taxon>
        <taxon>Chlamydia/Chlamydophila group</taxon>
        <taxon>Chlamydia</taxon>
    </lineage>
</organism>
<gene>
    <name evidence="1" type="primary">rplU</name>
    <name type="ordered locus">CTA_0456</name>
</gene>
<sequence length="107" mass="12163">MEPYAVIQTGNKQYQVRKGDVIDVELLDGISEENKEVLFQDVLFTFDGEKASVGAPTVGNAVVKGELVSFVRGEKVVAYKYKKRKNYHKKIGHRQNYLRVKISDLVM</sequence>
<name>RL21_CHLTA</name>
<dbReference type="EMBL" id="CP000051">
    <property type="protein sequence ID" value="AAX50689.1"/>
    <property type="molecule type" value="Genomic_DNA"/>
</dbReference>
<dbReference type="RefSeq" id="WP_009871772.1">
    <property type="nucleotide sequence ID" value="NC_007429.1"/>
</dbReference>
<dbReference type="SMR" id="Q3KLT3"/>
<dbReference type="KEGG" id="cta:CTA_0456"/>
<dbReference type="HOGENOM" id="CLU_061463_3_2_0"/>
<dbReference type="Proteomes" id="UP000002532">
    <property type="component" value="Chromosome"/>
</dbReference>
<dbReference type="GO" id="GO:0005737">
    <property type="term" value="C:cytoplasm"/>
    <property type="evidence" value="ECO:0007669"/>
    <property type="project" value="UniProtKB-ARBA"/>
</dbReference>
<dbReference type="GO" id="GO:1990904">
    <property type="term" value="C:ribonucleoprotein complex"/>
    <property type="evidence" value="ECO:0007669"/>
    <property type="project" value="UniProtKB-KW"/>
</dbReference>
<dbReference type="GO" id="GO:0005840">
    <property type="term" value="C:ribosome"/>
    <property type="evidence" value="ECO:0007669"/>
    <property type="project" value="UniProtKB-KW"/>
</dbReference>
<dbReference type="GO" id="GO:0019843">
    <property type="term" value="F:rRNA binding"/>
    <property type="evidence" value="ECO:0007669"/>
    <property type="project" value="UniProtKB-UniRule"/>
</dbReference>
<dbReference type="GO" id="GO:0003735">
    <property type="term" value="F:structural constituent of ribosome"/>
    <property type="evidence" value="ECO:0007669"/>
    <property type="project" value="InterPro"/>
</dbReference>
<dbReference type="GO" id="GO:0006412">
    <property type="term" value="P:translation"/>
    <property type="evidence" value="ECO:0007669"/>
    <property type="project" value="UniProtKB-UniRule"/>
</dbReference>
<dbReference type="HAMAP" id="MF_01363">
    <property type="entry name" value="Ribosomal_bL21"/>
    <property type="match status" value="1"/>
</dbReference>
<dbReference type="InterPro" id="IPR028909">
    <property type="entry name" value="bL21-like"/>
</dbReference>
<dbReference type="InterPro" id="IPR036164">
    <property type="entry name" value="bL21-like_sf"/>
</dbReference>
<dbReference type="InterPro" id="IPR001787">
    <property type="entry name" value="Ribosomal_bL21"/>
</dbReference>
<dbReference type="InterPro" id="IPR018258">
    <property type="entry name" value="Ribosomal_bL21_CS"/>
</dbReference>
<dbReference type="NCBIfam" id="TIGR00061">
    <property type="entry name" value="L21"/>
    <property type="match status" value="1"/>
</dbReference>
<dbReference type="PANTHER" id="PTHR21349">
    <property type="entry name" value="50S RIBOSOMAL PROTEIN L21"/>
    <property type="match status" value="1"/>
</dbReference>
<dbReference type="PANTHER" id="PTHR21349:SF0">
    <property type="entry name" value="LARGE RIBOSOMAL SUBUNIT PROTEIN BL21M"/>
    <property type="match status" value="1"/>
</dbReference>
<dbReference type="Pfam" id="PF00829">
    <property type="entry name" value="Ribosomal_L21p"/>
    <property type="match status" value="1"/>
</dbReference>
<dbReference type="SUPFAM" id="SSF141091">
    <property type="entry name" value="L21p-like"/>
    <property type="match status" value="1"/>
</dbReference>
<dbReference type="PROSITE" id="PS01169">
    <property type="entry name" value="RIBOSOMAL_L21"/>
    <property type="match status" value="1"/>
</dbReference>
<protein>
    <recommendedName>
        <fullName evidence="1">Large ribosomal subunit protein bL21</fullName>
    </recommendedName>
    <alternativeName>
        <fullName evidence="2">50S ribosomal protein L21</fullName>
    </alternativeName>
</protein>
<evidence type="ECO:0000255" key="1">
    <source>
        <dbReference type="HAMAP-Rule" id="MF_01363"/>
    </source>
</evidence>
<evidence type="ECO:0000305" key="2"/>
<keyword id="KW-0687">Ribonucleoprotein</keyword>
<keyword id="KW-0689">Ribosomal protein</keyword>
<keyword id="KW-0694">RNA-binding</keyword>
<keyword id="KW-0699">rRNA-binding</keyword>
<proteinExistence type="inferred from homology"/>
<feature type="chain" id="PRO_0000270648" description="Large ribosomal subunit protein bL21">
    <location>
        <begin position="1"/>
        <end position="107"/>
    </location>
</feature>
<accession>Q3KLT3</accession>